<reference key="1">
    <citation type="journal article" date="2003" name="Nature">
        <title>Genome divergence in two Prochlorococcus ecotypes reflects oceanic niche differentiation.</title>
        <authorList>
            <person name="Rocap G."/>
            <person name="Larimer F.W."/>
            <person name="Lamerdin J.E."/>
            <person name="Malfatti S."/>
            <person name="Chain P."/>
            <person name="Ahlgren N.A."/>
            <person name="Arellano A."/>
            <person name="Coleman M."/>
            <person name="Hauser L."/>
            <person name="Hess W.R."/>
            <person name="Johnson Z.I."/>
            <person name="Land M.L."/>
            <person name="Lindell D."/>
            <person name="Post A.F."/>
            <person name="Regala W."/>
            <person name="Shah M."/>
            <person name="Shaw S.L."/>
            <person name="Steglich C."/>
            <person name="Sullivan M.B."/>
            <person name="Ting C.S."/>
            <person name="Tolonen A."/>
            <person name="Webb E.A."/>
            <person name="Zinser E.R."/>
            <person name="Chisholm S.W."/>
        </authorList>
    </citation>
    <scope>NUCLEOTIDE SEQUENCE [LARGE SCALE GENOMIC DNA]</scope>
    <source>
        <strain>CCMP1986 / NIES-2087 / MED4</strain>
    </source>
</reference>
<name>KAIC_PROMP</name>
<proteinExistence type="inferred from homology"/>
<evidence type="ECO:0000255" key="1">
    <source>
        <dbReference type="HAMAP-Rule" id="MF_01836"/>
    </source>
</evidence>
<feature type="chain" id="PRO_0000217778" description="Circadian clock oscillator protein KaiC">
    <location>
        <begin position="1"/>
        <end position="509"/>
    </location>
</feature>
<feature type="domain" description="KaiC 1" evidence="1">
    <location>
        <begin position="1"/>
        <end position="243"/>
    </location>
</feature>
<feature type="domain" description="KaiC 2" evidence="1">
    <location>
        <begin position="257"/>
        <end position="509"/>
    </location>
</feature>
<feature type="binding site" evidence="1">
    <location>
        <position position="45"/>
    </location>
    <ligand>
        <name>ATP</name>
        <dbReference type="ChEBI" id="CHEBI:30616"/>
        <label>1</label>
        <note>ligand shared between homodimeric partners</note>
    </ligand>
</feature>
<feature type="binding site" evidence="1">
    <location>
        <position position="46"/>
    </location>
    <ligand>
        <name>ATP</name>
        <dbReference type="ChEBI" id="CHEBI:30616"/>
        <label>1</label>
        <note>ligand shared between homodimeric partners</note>
    </ligand>
</feature>
<feature type="binding site" evidence="1">
    <location>
        <position position="47"/>
    </location>
    <ligand>
        <name>ATP</name>
        <dbReference type="ChEBI" id="CHEBI:30616"/>
        <label>1</label>
        <note>ligand shared between homodimeric partners</note>
    </ligand>
</feature>
<feature type="binding site" evidence="1">
    <location>
        <position position="48"/>
    </location>
    <ligand>
        <name>ATP</name>
        <dbReference type="ChEBI" id="CHEBI:30616"/>
        <label>1</label>
        <note>ligand shared between homodimeric partners</note>
    </ligand>
</feature>
<feature type="binding site" evidence="1">
    <location>
        <position position="49"/>
    </location>
    <ligand>
        <name>ATP</name>
        <dbReference type="ChEBI" id="CHEBI:30616"/>
        <label>1</label>
        <note>ligand shared between homodimeric partners</note>
    </ligand>
</feature>
<feature type="binding site" evidence="1">
    <location>
        <position position="49"/>
    </location>
    <ligand>
        <name>Mg(2+)</name>
        <dbReference type="ChEBI" id="CHEBI:18420"/>
        <label>1</label>
    </ligand>
</feature>
<feature type="binding site" evidence="1">
    <location>
        <position position="85"/>
    </location>
    <ligand>
        <name>ATP</name>
        <dbReference type="ChEBI" id="CHEBI:30616"/>
        <label>1</label>
        <note>ligand shared between homodimeric partners</note>
    </ligand>
</feature>
<feature type="binding site" evidence="1">
    <location>
        <position position="220"/>
    </location>
    <ligand>
        <name>ATP</name>
        <dbReference type="ChEBI" id="CHEBI:30616"/>
        <label>1</label>
        <note>ligand shared between homodimeric partners</note>
    </ligand>
</feature>
<feature type="binding site" evidence="1">
    <location>
        <position position="221"/>
    </location>
    <ligand>
        <name>ATP</name>
        <dbReference type="ChEBI" id="CHEBI:30616"/>
        <label>1</label>
        <note>ligand shared between homodimeric partners</note>
    </ligand>
</feature>
<feature type="binding site" evidence="1">
    <location>
        <position position="222"/>
    </location>
    <ligand>
        <name>ATP</name>
        <dbReference type="ChEBI" id="CHEBI:30616"/>
        <label>1</label>
        <note>ligand shared between homodimeric partners</note>
    </ligand>
</feature>
<feature type="binding site" evidence="1">
    <location>
        <position position="224"/>
    </location>
    <ligand>
        <name>ATP</name>
        <dbReference type="ChEBI" id="CHEBI:30616"/>
        <label>1</label>
        <note>ligand shared between homodimeric partners</note>
    </ligand>
</feature>
<feature type="binding site" evidence="1">
    <location>
        <position position="226"/>
    </location>
    <ligand>
        <name>ATP</name>
        <dbReference type="ChEBI" id="CHEBI:30616"/>
        <label>1</label>
        <note>ligand shared between homodimeric partners</note>
    </ligand>
</feature>
<feature type="binding site" evidence="1">
    <location>
        <position position="237"/>
    </location>
    <ligand>
        <name>ATP</name>
        <dbReference type="ChEBI" id="CHEBI:30616"/>
        <label>1</label>
        <note>ligand shared between homodimeric partners</note>
    </ligand>
</feature>
<feature type="binding site" evidence="1">
    <location>
        <position position="286"/>
    </location>
    <ligand>
        <name>ATP</name>
        <dbReference type="ChEBI" id="CHEBI:30616"/>
        <label>2</label>
        <note>ligand shared between homodimeric partners</note>
    </ligand>
</feature>
<feature type="binding site" evidence="1">
    <location>
        <position position="287"/>
    </location>
    <ligand>
        <name>ATP</name>
        <dbReference type="ChEBI" id="CHEBI:30616"/>
        <label>2</label>
        <note>ligand shared between homodimeric partners</note>
    </ligand>
</feature>
<feature type="binding site" evidence="1">
    <location>
        <position position="288"/>
    </location>
    <ligand>
        <name>ATP</name>
        <dbReference type="ChEBI" id="CHEBI:30616"/>
        <label>2</label>
        <note>ligand shared between homodimeric partners</note>
    </ligand>
</feature>
<feature type="binding site" evidence="1">
    <location>
        <position position="289"/>
    </location>
    <ligand>
        <name>ATP</name>
        <dbReference type="ChEBI" id="CHEBI:30616"/>
        <label>2</label>
        <note>ligand shared between homodimeric partners</note>
    </ligand>
</feature>
<feature type="binding site" evidence="1">
    <location>
        <position position="290"/>
    </location>
    <ligand>
        <name>ATP</name>
        <dbReference type="ChEBI" id="CHEBI:30616"/>
        <label>2</label>
        <note>ligand shared between homodimeric partners</note>
    </ligand>
</feature>
<feature type="binding site" evidence="1">
    <location>
        <position position="291"/>
    </location>
    <ligand>
        <name>ATP</name>
        <dbReference type="ChEBI" id="CHEBI:30616"/>
        <label>2</label>
        <note>ligand shared between homodimeric partners</note>
    </ligand>
</feature>
<feature type="binding site" evidence="1">
    <location>
        <position position="291"/>
    </location>
    <ligand>
        <name>Mg(2+)</name>
        <dbReference type="ChEBI" id="CHEBI:18420"/>
        <label>2</label>
    </ligand>
</feature>
<feature type="binding site" evidence="1">
    <location>
        <position position="314"/>
    </location>
    <ligand>
        <name>Mg(2+)</name>
        <dbReference type="ChEBI" id="CHEBI:18420"/>
        <label>2</label>
    </ligand>
</feature>
<feature type="binding site" evidence="1">
    <location>
        <position position="327"/>
    </location>
    <ligand>
        <name>ATP</name>
        <dbReference type="ChEBI" id="CHEBI:30616"/>
        <label>2</label>
        <note>ligand shared between homodimeric partners</note>
    </ligand>
</feature>
<feature type="binding site" evidence="1">
    <location>
        <position position="447"/>
    </location>
    <ligand>
        <name>ATP</name>
        <dbReference type="ChEBI" id="CHEBI:30616"/>
        <label>2</label>
        <note>ligand shared between homodimeric partners</note>
    </ligand>
</feature>
<feature type="binding site" evidence="1">
    <location>
        <position position="453"/>
    </location>
    <ligand>
        <name>ATP</name>
        <dbReference type="ChEBI" id="CHEBI:30616"/>
        <label>2</label>
        <note>ligand shared between homodimeric partners</note>
    </ligand>
</feature>
<feature type="binding site" evidence="1">
    <location>
        <position position="454"/>
    </location>
    <ligand>
        <name>ATP</name>
        <dbReference type="ChEBI" id="CHEBI:30616"/>
        <label>2</label>
        <note>ligand shared between homodimeric partners</note>
    </ligand>
</feature>
<feature type="binding site" evidence="1">
    <location>
        <position position="455"/>
    </location>
    <ligand>
        <name>ATP</name>
        <dbReference type="ChEBI" id="CHEBI:30616"/>
        <label>2</label>
        <note>ligand shared between homodimeric partners</note>
    </ligand>
</feature>
<feature type="binding site" evidence="1">
    <location>
        <position position="457"/>
    </location>
    <ligand>
        <name>ATP</name>
        <dbReference type="ChEBI" id="CHEBI:30616"/>
        <label>2</label>
        <note>ligand shared between homodimeric partners</note>
    </ligand>
</feature>
<feature type="binding site" evidence="1">
    <location>
        <position position="459"/>
    </location>
    <ligand>
        <name>ATP</name>
        <dbReference type="ChEBI" id="CHEBI:30616"/>
        <label>2</label>
        <note>ligand shared between homodimeric partners</note>
    </ligand>
</feature>
<feature type="binding site" evidence="1">
    <location>
        <position position="461"/>
    </location>
    <ligand>
        <name>ATP</name>
        <dbReference type="ChEBI" id="CHEBI:30616"/>
        <label>2</label>
        <note>ligand shared between homodimeric partners</note>
    </ligand>
</feature>
<feature type="modified residue" description="Phosphoserine; by autocatalysis" evidence="1">
    <location>
        <position position="427"/>
    </location>
</feature>
<feature type="modified residue" description="Phosphothreonine; by autocatalysis" evidence="1">
    <location>
        <position position="428"/>
    </location>
</feature>
<keyword id="KW-0067">ATP-binding</keyword>
<keyword id="KW-0090">Biological rhythms</keyword>
<keyword id="KW-0378">Hydrolase</keyword>
<keyword id="KW-0418">Kinase</keyword>
<keyword id="KW-0460">Magnesium</keyword>
<keyword id="KW-0479">Metal-binding</keyword>
<keyword id="KW-0547">Nucleotide-binding</keyword>
<keyword id="KW-0597">Phosphoprotein</keyword>
<keyword id="KW-0677">Repeat</keyword>
<keyword id="KW-0723">Serine/threonine-protein kinase</keyword>
<keyword id="KW-0804">Transcription</keyword>
<keyword id="KW-0805">Transcription regulation</keyword>
<keyword id="KW-0808">Transferase</keyword>
<organism>
    <name type="scientific">Prochlorococcus marinus subsp. pastoris (strain CCMP1986 / NIES-2087 / MED4)</name>
    <dbReference type="NCBI Taxonomy" id="59919"/>
    <lineage>
        <taxon>Bacteria</taxon>
        <taxon>Bacillati</taxon>
        <taxon>Cyanobacteriota</taxon>
        <taxon>Cyanophyceae</taxon>
        <taxon>Synechococcales</taxon>
        <taxon>Prochlorococcaceae</taxon>
        <taxon>Prochlorococcus</taxon>
    </lineage>
</organism>
<accession>Q7V0C4</accession>
<gene>
    <name evidence="1" type="primary">kaiC</name>
    <name type="ordered locus">PMM1342</name>
</gene>
<sequence length="509" mass="56950">MKDKKISKSIKMQVQKIPTGIEGFDDVCRGGLPAARSTLVSGTSGTGKTVFSLQYLHHGICNFDEPGIFITFEESPLDIIRNAASFGWDLQKLIDQNKLFILDASPDPDGQDVAGNFDLSGLIERISYAIRKYKAKRVAIDSITAVFQQYDAIYVVRREIFRLIARLKEIGVTTVMTTERVDDYGPIARYGVEEFVSDNVVLLRNVLEAEKRRRTLEVLKLRGTVHMKGEFPFTMGDDGIIVFALGAMRLTQRSSNIRISSGVKDLDEMCGGGYFQDSIILATGATGTGKTMLVSKFIEDAYNNKERAILFAYEESRAQLNRNATSWGIDFEKMENEGLLKIICAYPESTGLEDHLQIIKSQINEFKPKRLAIDSLSALARGVSLNAFRQFVIGVTGYSKQEEIAGFFTNTAEEFMGSHSITDSHISTITDTILLLQYVEIKGEMARAINVFKMRGSWHDKRIREYIITGQGPEIKDSFSNFEQIFSGAPHRVISDQSIPNVFKGIEKN</sequence>
<comment type="function">
    <text evidence="1">Central component of the KaiBC oscillator complex, which constitutes the main circadian regulator in cyanobacteria. Its composition changes during the circadian cycle to control KaiC phosphorylation. Autophosphorylates and has a weak ATPase activity; ATPase activity defines the circadian period.</text>
</comment>
<comment type="catalytic activity">
    <reaction evidence="1">
        <text>L-seryl-[protein] + ATP = O-phospho-L-seryl-[protein] + ADP + H(+)</text>
        <dbReference type="Rhea" id="RHEA:17989"/>
        <dbReference type="Rhea" id="RHEA-COMP:9863"/>
        <dbReference type="Rhea" id="RHEA-COMP:11604"/>
        <dbReference type="ChEBI" id="CHEBI:15378"/>
        <dbReference type="ChEBI" id="CHEBI:29999"/>
        <dbReference type="ChEBI" id="CHEBI:30616"/>
        <dbReference type="ChEBI" id="CHEBI:83421"/>
        <dbReference type="ChEBI" id="CHEBI:456216"/>
        <dbReference type="EC" id="2.7.11.1"/>
    </reaction>
</comment>
<comment type="catalytic activity">
    <reaction evidence="1">
        <text>L-threonyl-[protein] + ATP = O-phospho-L-threonyl-[protein] + ADP + H(+)</text>
        <dbReference type="Rhea" id="RHEA:46608"/>
        <dbReference type="Rhea" id="RHEA-COMP:11060"/>
        <dbReference type="Rhea" id="RHEA-COMP:11605"/>
        <dbReference type="ChEBI" id="CHEBI:15378"/>
        <dbReference type="ChEBI" id="CHEBI:30013"/>
        <dbReference type="ChEBI" id="CHEBI:30616"/>
        <dbReference type="ChEBI" id="CHEBI:61977"/>
        <dbReference type="ChEBI" id="CHEBI:456216"/>
        <dbReference type="EC" id="2.7.11.1"/>
    </reaction>
</comment>
<comment type="catalytic activity">
    <reaction evidence="1">
        <text>ATP + H2O = ADP + phosphate + H(+)</text>
        <dbReference type="Rhea" id="RHEA:13065"/>
        <dbReference type="ChEBI" id="CHEBI:15377"/>
        <dbReference type="ChEBI" id="CHEBI:15378"/>
        <dbReference type="ChEBI" id="CHEBI:30616"/>
        <dbReference type="ChEBI" id="CHEBI:43474"/>
        <dbReference type="ChEBI" id="CHEBI:456216"/>
    </reaction>
</comment>
<comment type="cofactor">
    <cofactor evidence="1">
        <name>Mg(2+)</name>
        <dbReference type="ChEBI" id="CHEBI:18420"/>
    </cofactor>
    <text evidence="1">Binds 2 Mg(2+) ions per subunit, one in each domain. Mg(2+) is required for hexamerization and phosphatase activity.</text>
</comment>
<comment type="subunit">
    <text evidence="1">Homohexamer; hexamerization is dependent on ATP-binding. Component of the KaiBC complex. KaiC interacts with SasA, activating its autokinase function and leading to RpaA activation.</text>
</comment>
<comment type="domain">
    <text evidence="1">In the homohexamer the 2 domains (called CI and CII) self-associate to each form a 'donut' layer; the compactness and local conformation of the domains varies over the cell cycle and impacts function. CII has the autokinase and autophosphatase activities, both CI and CII have (weak) ATPase activity; CI has the clock pacemaker role.</text>
</comment>
<comment type="PTM">
    <text evidence="1">Phosphorylated on serine and threonine residues by autocatalysis. Has a 4 step phosphorylation cycle; the autokinase acts first on Thr-428, then Ser-427. When Ser-427 is modified KaiC switches to an autophosphatase mode, acting first on phospho-Thr-428 then phospho-Ser-427.</text>
</comment>
<comment type="miscellaneous">
    <text evidence="1">The kiaA gene has been eliminated from Prochlorococcus during genome streamlining. It has been suggested that the central oscillator in Prochlorococcus does not have to be as robust as in other cyanobacteria because the former live in specific niches of the Earth's oceans; they divide exactly once a day and at the same time. Thus gene loss, and changes in kaiC function compared to other cyanobacteria, can occur.</text>
</comment>
<comment type="similarity">
    <text evidence="1">Belongs to the KaiC family.</text>
</comment>
<protein>
    <recommendedName>
        <fullName evidence="1">Circadian clock oscillator protein KaiC</fullName>
        <ecNumber evidence="1">2.7.11.1</ecNumber>
        <ecNumber evidence="1">3.6.4.-</ecNumber>
    </recommendedName>
</protein>
<dbReference type="EC" id="2.7.11.1" evidence="1"/>
<dbReference type="EC" id="3.6.4.-" evidence="1"/>
<dbReference type="EMBL" id="BX548174">
    <property type="protein sequence ID" value="CAE19801.1"/>
    <property type="molecule type" value="Genomic_DNA"/>
</dbReference>
<dbReference type="RefSeq" id="WP_011132976.1">
    <property type="nucleotide sequence ID" value="NC_005072.1"/>
</dbReference>
<dbReference type="SMR" id="Q7V0C4"/>
<dbReference type="STRING" id="59919.PMM1342"/>
<dbReference type="KEGG" id="pmm:PMM1342"/>
<dbReference type="eggNOG" id="COG0467">
    <property type="taxonomic scope" value="Bacteria"/>
</dbReference>
<dbReference type="HOGENOM" id="CLU_023669_4_1_3"/>
<dbReference type="OrthoDB" id="9787927at2"/>
<dbReference type="Proteomes" id="UP000001026">
    <property type="component" value="Chromosome"/>
</dbReference>
<dbReference type="GO" id="GO:0005524">
    <property type="term" value="F:ATP binding"/>
    <property type="evidence" value="ECO:0007669"/>
    <property type="project" value="UniProtKB-UniRule"/>
</dbReference>
<dbReference type="GO" id="GO:0016887">
    <property type="term" value="F:ATP hydrolysis activity"/>
    <property type="evidence" value="ECO:0007669"/>
    <property type="project" value="RHEA"/>
</dbReference>
<dbReference type="GO" id="GO:0003677">
    <property type="term" value="F:DNA binding"/>
    <property type="evidence" value="ECO:0007669"/>
    <property type="project" value="InterPro"/>
</dbReference>
<dbReference type="GO" id="GO:0000287">
    <property type="term" value="F:magnesium ion binding"/>
    <property type="evidence" value="ECO:0007669"/>
    <property type="project" value="UniProtKB-UniRule"/>
</dbReference>
<dbReference type="GO" id="GO:0106310">
    <property type="term" value="F:protein serine kinase activity"/>
    <property type="evidence" value="ECO:0007669"/>
    <property type="project" value="RHEA"/>
</dbReference>
<dbReference type="GO" id="GO:0004674">
    <property type="term" value="F:protein serine/threonine kinase activity"/>
    <property type="evidence" value="ECO:0007669"/>
    <property type="project" value="UniProtKB-KW"/>
</dbReference>
<dbReference type="GO" id="GO:0004712">
    <property type="term" value="F:protein serine/threonine/tyrosine kinase activity"/>
    <property type="evidence" value="ECO:0007669"/>
    <property type="project" value="UniProtKB-UniRule"/>
</dbReference>
<dbReference type="GO" id="GO:0007623">
    <property type="term" value="P:circadian rhythm"/>
    <property type="evidence" value="ECO:0007669"/>
    <property type="project" value="UniProtKB-UniRule"/>
</dbReference>
<dbReference type="GO" id="GO:0042752">
    <property type="term" value="P:regulation of circadian rhythm"/>
    <property type="evidence" value="ECO:0007669"/>
    <property type="project" value="InterPro"/>
</dbReference>
<dbReference type="GO" id="GO:0006355">
    <property type="term" value="P:regulation of DNA-templated transcription"/>
    <property type="evidence" value="ECO:0007669"/>
    <property type="project" value="InterPro"/>
</dbReference>
<dbReference type="CDD" id="cd19485">
    <property type="entry name" value="KaiC-N"/>
    <property type="match status" value="1"/>
</dbReference>
<dbReference type="CDD" id="cd19484">
    <property type="entry name" value="KaiC_C"/>
    <property type="match status" value="1"/>
</dbReference>
<dbReference type="Gene3D" id="3.40.50.300">
    <property type="entry name" value="P-loop containing nucleotide triphosphate hydrolases"/>
    <property type="match status" value="2"/>
</dbReference>
<dbReference type="HAMAP" id="MF_01836">
    <property type="entry name" value="KaiC"/>
    <property type="match status" value="1"/>
</dbReference>
<dbReference type="InterPro" id="IPR051347">
    <property type="entry name" value="Circadian_clock_KaiC-rel"/>
</dbReference>
<dbReference type="InterPro" id="IPR013503">
    <property type="entry name" value="Circadian_KaiC_bact"/>
</dbReference>
<dbReference type="InterPro" id="IPR030665">
    <property type="entry name" value="KaiC"/>
</dbReference>
<dbReference type="InterPro" id="IPR014774">
    <property type="entry name" value="KaiC-like_dom"/>
</dbReference>
<dbReference type="InterPro" id="IPR047222">
    <property type="entry name" value="KaiC_C"/>
</dbReference>
<dbReference type="InterPro" id="IPR010624">
    <property type="entry name" value="KaiC_dom"/>
</dbReference>
<dbReference type="InterPro" id="IPR047221">
    <property type="entry name" value="KaiC_N"/>
</dbReference>
<dbReference type="InterPro" id="IPR027417">
    <property type="entry name" value="P-loop_NTPase"/>
</dbReference>
<dbReference type="NCBIfam" id="TIGR02655">
    <property type="entry name" value="circ_KaiC"/>
    <property type="match status" value="1"/>
</dbReference>
<dbReference type="NCBIfam" id="NF006799">
    <property type="entry name" value="PRK09302.1"/>
    <property type="match status" value="1"/>
</dbReference>
<dbReference type="PANTHER" id="PTHR42926">
    <property type="match status" value="1"/>
</dbReference>
<dbReference type="PANTHER" id="PTHR42926:SF1">
    <property type="entry name" value="CIRCADIAN CLOCK OSCILLATOR PROTEIN KAIC 1"/>
    <property type="match status" value="1"/>
</dbReference>
<dbReference type="Pfam" id="PF06745">
    <property type="entry name" value="ATPase"/>
    <property type="match status" value="2"/>
</dbReference>
<dbReference type="PIRSF" id="PIRSF039117">
    <property type="entry name" value="KaiC"/>
    <property type="match status" value="1"/>
</dbReference>
<dbReference type="SUPFAM" id="SSF52540">
    <property type="entry name" value="P-loop containing nucleoside triphosphate hydrolases"/>
    <property type="match status" value="2"/>
</dbReference>
<dbReference type="PROSITE" id="PS51146">
    <property type="entry name" value="KAIC"/>
    <property type="match status" value="2"/>
</dbReference>